<reference key="1">
    <citation type="submission" date="2006-08" db="EMBL/GenBank/DDBJ databases">
        <title>Complete sequence of chromosome 1 of Burkholderia cenocepacia HI2424.</title>
        <authorList>
            <person name="Copeland A."/>
            <person name="Lucas S."/>
            <person name="Lapidus A."/>
            <person name="Barry K."/>
            <person name="Detter J.C."/>
            <person name="Glavina del Rio T."/>
            <person name="Hammon N."/>
            <person name="Israni S."/>
            <person name="Pitluck S."/>
            <person name="Chain P."/>
            <person name="Malfatti S."/>
            <person name="Shin M."/>
            <person name="Vergez L."/>
            <person name="Schmutz J."/>
            <person name="Larimer F."/>
            <person name="Land M."/>
            <person name="Hauser L."/>
            <person name="Kyrpides N."/>
            <person name="Kim E."/>
            <person name="LiPuma J.J."/>
            <person name="Gonzalez C.F."/>
            <person name="Konstantinidis K."/>
            <person name="Tiedje J.M."/>
            <person name="Richardson P."/>
        </authorList>
    </citation>
    <scope>NUCLEOTIDE SEQUENCE [LARGE SCALE GENOMIC DNA]</scope>
    <source>
        <strain>HI2424</strain>
    </source>
</reference>
<dbReference type="EMBL" id="CP000458">
    <property type="protein sequence ID" value="ABK07107.1"/>
    <property type="molecule type" value="Genomic_DNA"/>
</dbReference>
<dbReference type="RefSeq" id="WP_004199272.1">
    <property type="nucleotide sequence ID" value="NC_008542.1"/>
</dbReference>
<dbReference type="SMR" id="A0K3N0"/>
<dbReference type="GeneID" id="98107155"/>
<dbReference type="KEGG" id="bch:Bcen2424_0353"/>
<dbReference type="HOGENOM" id="CLU_083987_3_3_4"/>
<dbReference type="GO" id="GO:0022625">
    <property type="term" value="C:cytosolic large ribosomal subunit"/>
    <property type="evidence" value="ECO:0007669"/>
    <property type="project" value="TreeGrafter"/>
</dbReference>
<dbReference type="GO" id="GO:0019843">
    <property type="term" value="F:rRNA binding"/>
    <property type="evidence" value="ECO:0007669"/>
    <property type="project" value="UniProtKB-UniRule"/>
</dbReference>
<dbReference type="GO" id="GO:0003735">
    <property type="term" value="F:structural constituent of ribosome"/>
    <property type="evidence" value="ECO:0007669"/>
    <property type="project" value="InterPro"/>
</dbReference>
<dbReference type="GO" id="GO:0006412">
    <property type="term" value="P:translation"/>
    <property type="evidence" value="ECO:0007669"/>
    <property type="project" value="UniProtKB-UniRule"/>
</dbReference>
<dbReference type="CDD" id="cd00336">
    <property type="entry name" value="Ribosomal_L22"/>
    <property type="match status" value="1"/>
</dbReference>
<dbReference type="FunFam" id="3.90.470.10:FF:000001">
    <property type="entry name" value="50S ribosomal protein L22"/>
    <property type="match status" value="1"/>
</dbReference>
<dbReference type="Gene3D" id="3.90.470.10">
    <property type="entry name" value="Ribosomal protein L22/L17"/>
    <property type="match status" value="1"/>
</dbReference>
<dbReference type="HAMAP" id="MF_01331_B">
    <property type="entry name" value="Ribosomal_uL22_B"/>
    <property type="match status" value="1"/>
</dbReference>
<dbReference type="InterPro" id="IPR001063">
    <property type="entry name" value="Ribosomal_uL22"/>
</dbReference>
<dbReference type="InterPro" id="IPR005727">
    <property type="entry name" value="Ribosomal_uL22_bac/chlpt-type"/>
</dbReference>
<dbReference type="InterPro" id="IPR047867">
    <property type="entry name" value="Ribosomal_uL22_bac/org-type"/>
</dbReference>
<dbReference type="InterPro" id="IPR018260">
    <property type="entry name" value="Ribosomal_uL22_CS"/>
</dbReference>
<dbReference type="InterPro" id="IPR036394">
    <property type="entry name" value="Ribosomal_uL22_sf"/>
</dbReference>
<dbReference type="NCBIfam" id="TIGR01044">
    <property type="entry name" value="rplV_bact"/>
    <property type="match status" value="1"/>
</dbReference>
<dbReference type="PANTHER" id="PTHR13501">
    <property type="entry name" value="CHLOROPLAST 50S RIBOSOMAL PROTEIN L22-RELATED"/>
    <property type="match status" value="1"/>
</dbReference>
<dbReference type="PANTHER" id="PTHR13501:SF8">
    <property type="entry name" value="LARGE RIBOSOMAL SUBUNIT PROTEIN UL22M"/>
    <property type="match status" value="1"/>
</dbReference>
<dbReference type="Pfam" id="PF00237">
    <property type="entry name" value="Ribosomal_L22"/>
    <property type="match status" value="1"/>
</dbReference>
<dbReference type="SUPFAM" id="SSF54843">
    <property type="entry name" value="Ribosomal protein L22"/>
    <property type="match status" value="1"/>
</dbReference>
<dbReference type="PROSITE" id="PS00464">
    <property type="entry name" value="RIBOSOMAL_L22"/>
    <property type="match status" value="1"/>
</dbReference>
<organism>
    <name type="scientific">Burkholderia cenocepacia (strain HI2424)</name>
    <dbReference type="NCBI Taxonomy" id="331272"/>
    <lineage>
        <taxon>Bacteria</taxon>
        <taxon>Pseudomonadati</taxon>
        <taxon>Pseudomonadota</taxon>
        <taxon>Betaproteobacteria</taxon>
        <taxon>Burkholderiales</taxon>
        <taxon>Burkholderiaceae</taxon>
        <taxon>Burkholderia</taxon>
        <taxon>Burkholderia cepacia complex</taxon>
    </lineage>
</organism>
<feature type="chain" id="PRO_1000052544" description="Large ribosomal subunit protein uL22">
    <location>
        <begin position="1"/>
        <end position="109"/>
    </location>
</feature>
<proteinExistence type="inferred from homology"/>
<gene>
    <name evidence="1" type="primary">rplV</name>
    <name type="ordered locus">Bcen2424_0353</name>
</gene>
<keyword id="KW-0687">Ribonucleoprotein</keyword>
<keyword id="KW-0689">Ribosomal protein</keyword>
<keyword id="KW-0694">RNA-binding</keyword>
<keyword id="KW-0699">rRNA-binding</keyword>
<protein>
    <recommendedName>
        <fullName evidence="1">Large ribosomal subunit protein uL22</fullName>
    </recommendedName>
    <alternativeName>
        <fullName evidence="2">50S ribosomal protein L22</fullName>
    </alternativeName>
</protein>
<accession>A0K3N0</accession>
<comment type="function">
    <text evidence="1">This protein binds specifically to 23S rRNA; its binding is stimulated by other ribosomal proteins, e.g. L4, L17, and L20. It is important during the early stages of 50S assembly. It makes multiple contacts with different domains of the 23S rRNA in the assembled 50S subunit and ribosome (By similarity).</text>
</comment>
<comment type="function">
    <text evidence="1">The globular domain of the protein is located near the polypeptide exit tunnel on the outside of the subunit, while an extended beta-hairpin is found that lines the wall of the exit tunnel in the center of the 70S ribosome.</text>
</comment>
<comment type="subunit">
    <text evidence="1">Part of the 50S ribosomal subunit.</text>
</comment>
<comment type="similarity">
    <text evidence="1">Belongs to the universal ribosomal protein uL22 family.</text>
</comment>
<evidence type="ECO:0000255" key="1">
    <source>
        <dbReference type="HAMAP-Rule" id="MF_01331"/>
    </source>
</evidence>
<evidence type="ECO:0000305" key="2"/>
<name>RL22_BURCH</name>
<sequence>MEVKAIHRGARISAQKTRLVADQIRGLPVDKALNVLTFSPKKAAGIVKKVVLSAIANAEHNEGADIDELKIKSIYVDKAASLKRFTARAKGRGNRIEKQSCHITVTVGN</sequence>